<accession>Q28858</accession>
<accession>Q28859</accession>
<accession>Q28860</accession>
<comment type="function">
    <text>May play a role in intercellular signaling and in connecting cells with the extracellular matrix. May take part in the regulation of cell motility, growth and differentiation. Binds hyaluronan.</text>
</comment>
<comment type="subunit">
    <text evidence="1">Interacts with FBLN1.</text>
</comment>
<comment type="subcellular location">
    <subcellularLocation>
        <location evidence="2">Secreted</location>
        <location evidence="2">Extracellular space</location>
        <location evidence="2">Extracellular matrix</location>
    </subcellularLocation>
    <subcellularLocation>
        <location evidence="2">Cell projection</location>
        <location evidence="2">Cilium</location>
        <location evidence="2">Photoreceptor outer segment</location>
    </subcellularLocation>
    <subcellularLocation>
        <location evidence="2">Secreted</location>
        <location evidence="2">Extracellular space</location>
        <location evidence="2">Extracellular matrix</location>
        <location evidence="2">Interphotoreceptor matrix</location>
    </subcellularLocation>
</comment>
<comment type="developmental stage">
    <text>Disappears after the cartilage development.</text>
</comment>
<comment type="PTM">
    <text evidence="2">Phosphorylated by FAM20C in the extracellular medium.</text>
</comment>
<comment type="similarity">
    <text evidence="8">Belongs to the aggrecan/versican proteoglycan family.</text>
</comment>
<name>CSPG2_MACNE</name>
<keyword id="KW-0106">Calcium</keyword>
<keyword id="KW-0966">Cell projection</keyword>
<keyword id="KW-1015">Disulfide bond</keyword>
<keyword id="KW-0245">EGF-like domain</keyword>
<keyword id="KW-0272">Extracellular matrix</keyword>
<keyword id="KW-0325">Glycoprotein</keyword>
<keyword id="KW-0430">Lectin</keyword>
<keyword id="KW-0597">Phosphoprotein</keyword>
<keyword id="KW-0654">Proteoglycan</keyword>
<keyword id="KW-1185">Reference proteome</keyword>
<keyword id="KW-0677">Repeat</keyword>
<keyword id="KW-0964">Secreted</keyword>
<feature type="chain" id="PRO_0000046693" description="Versican core protein">
    <location>
        <begin position="1" status="less than"/>
        <end position="862" status="greater than"/>
    </location>
</feature>
<feature type="domain" description="Link 1" evidence="6">
    <location>
        <begin position="1" status="less than"/>
        <end position="38"/>
    </location>
</feature>
<feature type="domain" description="Link 2" evidence="6">
    <location>
        <begin position="44"/>
        <end position="140"/>
    </location>
</feature>
<feature type="domain" description="EGF-like 1" evidence="5">
    <location>
        <begin position="718"/>
        <end position="754"/>
    </location>
</feature>
<feature type="domain" description="EGF-like 2; calcium-binding" evidence="5">
    <location>
        <begin position="756"/>
        <end position="792"/>
    </location>
</feature>
<feature type="domain" description="C-type lectin" evidence="4">
    <location>
        <begin position="805"/>
        <end position="862" status="greater than"/>
    </location>
</feature>
<feature type="region of interest" description="GAG-alpha (glucosaminoglycan attachment domain)">
    <location>
        <begin position="141"/>
        <end position="233" status="greater than"/>
    </location>
</feature>
<feature type="region of interest" description="Glucosaminoglycan attachment domain, similar to chondroitin sulfate attachment site in collagen type IX" evidence="1">
    <location>
        <begin position="234" status="less than"/>
        <end position="525" status="greater than"/>
    </location>
</feature>
<feature type="region of interest" description="Disordered" evidence="7">
    <location>
        <begin position="251"/>
        <end position="288"/>
    </location>
</feature>
<feature type="compositionally biased region" description="Acidic residues" evidence="7">
    <location>
        <begin position="264"/>
        <end position="273"/>
    </location>
</feature>
<feature type="modified residue" description="Phosphoserine" evidence="2">
    <location>
        <position position="269"/>
    </location>
</feature>
<feature type="glycosylation site" description="N-linked (GlcNAc...) asparagine" evidence="3">
    <location>
        <position position="123"/>
    </location>
</feature>
<feature type="glycosylation site" description="N-linked (GlcNAc...) asparagine" evidence="3">
    <location>
        <position position="204"/>
    </location>
</feature>
<feature type="glycosylation site" description="N-linked (GlcNAc...) asparagine" evidence="3">
    <location>
        <position position="332"/>
    </location>
</feature>
<feature type="glycosylation site" description="O-linked (Xyl...) (chondroitin sulfate) serine" evidence="2">
    <location>
        <position position="407"/>
    </location>
</feature>
<feature type="glycosylation site" description="N-linked (GlcNAc...) asparagine" evidence="3">
    <location>
        <position position="425"/>
    </location>
</feature>
<feature type="glycosylation site" description="N-linked (GlcNAc...) asparagine" evidence="3">
    <location>
        <position position="477"/>
    </location>
</feature>
<feature type="glycosylation site" description="N-linked (GlcNAc...) asparagine" evidence="3">
    <location>
        <position position="513"/>
    </location>
</feature>
<feature type="glycosylation site" description="N-linked (GlcNAc...) asparagine" evidence="3">
    <location>
        <position position="563"/>
    </location>
</feature>
<feature type="glycosylation site" description="N-linked (GlcNAc...) asparagine" evidence="3">
    <location>
        <position position="696"/>
    </location>
</feature>
<feature type="disulfide bond" evidence="1">
    <location>
        <begin position="63"/>
        <end position="138"/>
    </location>
</feature>
<feature type="disulfide bond" evidence="1">
    <location>
        <begin position="87"/>
        <end position="108"/>
    </location>
</feature>
<feature type="disulfide bond" evidence="1">
    <location>
        <begin position="722"/>
        <end position="733"/>
    </location>
</feature>
<feature type="disulfide bond" evidence="1">
    <location>
        <begin position="727"/>
        <end position="742"/>
    </location>
</feature>
<feature type="disulfide bond" evidence="1">
    <location>
        <begin position="744"/>
        <end position="753"/>
    </location>
</feature>
<feature type="disulfide bond" evidence="1">
    <location>
        <begin position="760"/>
        <end position="771"/>
    </location>
</feature>
<feature type="disulfide bond" evidence="1">
    <location>
        <begin position="765"/>
        <end position="780"/>
    </location>
</feature>
<feature type="disulfide bond" evidence="1">
    <location>
        <begin position="782"/>
        <end position="791"/>
    </location>
</feature>
<feature type="non-consecutive residues" evidence="8">
    <location>
        <begin position="233"/>
        <end position="234"/>
    </location>
</feature>
<feature type="non-consecutive residues" evidence="8">
    <location>
        <begin position="525"/>
        <end position="526"/>
    </location>
</feature>
<feature type="non-terminal residue">
    <location>
        <position position="1"/>
    </location>
</feature>
<feature type="non-terminal residue">
    <location>
        <position position="862"/>
    </location>
</feature>
<dbReference type="EMBL" id="S72412">
    <property type="protein sequence ID" value="AAA65593.2"/>
    <property type="molecule type" value="mRNA"/>
</dbReference>
<dbReference type="EMBL" id="S72413">
    <property type="protein sequence ID" value="AAA65594.2"/>
    <property type="molecule type" value="mRNA"/>
</dbReference>
<dbReference type="EMBL" id="S72414">
    <property type="protein sequence ID" value="AAA65595.2"/>
    <property type="molecule type" value="mRNA"/>
</dbReference>
<dbReference type="PIR" id="S43922">
    <property type="entry name" value="S43922"/>
</dbReference>
<dbReference type="SMR" id="Q28858"/>
<dbReference type="STRING" id="9545.ENSMNEP00000026950"/>
<dbReference type="GlyCosmos" id="Q28858">
    <property type="glycosylation" value="8 sites, No reported glycans"/>
</dbReference>
<dbReference type="Proteomes" id="UP000233120">
    <property type="component" value="Unassembled WGS sequence"/>
</dbReference>
<dbReference type="GO" id="GO:0005576">
    <property type="term" value="C:extracellular region"/>
    <property type="evidence" value="ECO:0000250"/>
    <property type="project" value="UniProtKB"/>
</dbReference>
<dbReference type="GO" id="GO:0005615">
    <property type="term" value="C:extracellular space"/>
    <property type="evidence" value="ECO:0007669"/>
    <property type="project" value="TreeGrafter"/>
</dbReference>
<dbReference type="GO" id="GO:0033165">
    <property type="term" value="C:interphotoreceptor matrix"/>
    <property type="evidence" value="ECO:0007669"/>
    <property type="project" value="UniProtKB-SubCell"/>
</dbReference>
<dbReference type="GO" id="GO:0072534">
    <property type="term" value="C:perineuronal net"/>
    <property type="evidence" value="ECO:0007669"/>
    <property type="project" value="TreeGrafter"/>
</dbReference>
<dbReference type="GO" id="GO:0001750">
    <property type="term" value="C:photoreceptor outer segment"/>
    <property type="evidence" value="ECO:0007669"/>
    <property type="project" value="UniProtKB-SubCell"/>
</dbReference>
<dbReference type="GO" id="GO:0045202">
    <property type="term" value="C:synapse"/>
    <property type="evidence" value="ECO:0007669"/>
    <property type="project" value="TreeGrafter"/>
</dbReference>
<dbReference type="GO" id="GO:0005509">
    <property type="term" value="F:calcium ion binding"/>
    <property type="evidence" value="ECO:0007669"/>
    <property type="project" value="InterPro"/>
</dbReference>
<dbReference type="GO" id="GO:0030246">
    <property type="term" value="F:carbohydrate binding"/>
    <property type="evidence" value="ECO:0007669"/>
    <property type="project" value="UniProtKB-KW"/>
</dbReference>
<dbReference type="GO" id="GO:0005540">
    <property type="term" value="F:hyaluronic acid binding"/>
    <property type="evidence" value="ECO:0007669"/>
    <property type="project" value="InterPro"/>
</dbReference>
<dbReference type="GO" id="GO:0007155">
    <property type="term" value="P:cell adhesion"/>
    <property type="evidence" value="ECO:0007669"/>
    <property type="project" value="InterPro"/>
</dbReference>
<dbReference type="GO" id="GO:0007417">
    <property type="term" value="P:central nervous system development"/>
    <property type="evidence" value="ECO:0007669"/>
    <property type="project" value="TreeGrafter"/>
</dbReference>
<dbReference type="GO" id="GO:0010001">
    <property type="term" value="P:glial cell differentiation"/>
    <property type="evidence" value="ECO:0007669"/>
    <property type="project" value="TreeGrafter"/>
</dbReference>
<dbReference type="GO" id="GO:0002052">
    <property type="term" value="P:positive regulation of neuroblast proliferation"/>
    <property type="evidence" value="ECO:0007669"/>
    <property type="project" value="TreeGrafter"/>
</dbReference>
<dbReference type="GO" id="GO:0001501">
    <property type="term" value="P:skeletal system development"/>
    <property type="evidence" value="ECO:0007669"/>
    <property type="project" value="TreeGrafter"/>
</dbReference>
<dbReference type="CDD" id="cd00054">
    <property type="entry name" value="EGF_CA"/>
    <property type="match status" value="2"/>
</dbReference>
<dbReference type="CDD" id="cd03520">
    <property type="entry name" value="Link_domain_CSPGs_modules_2_4"/>
    <property type="match status" value="1"/>
</dbReference>
<dbReference type="FunFam" id="3.10.100.10:FF:000011">
    <property type="entry name" value="Aggrecan core protein"/>
    <property type="match status" value="1"/>
</dbReference>
<dbReference type="FunFam" id="2.10.25.10:FF:000527">
    <property type="entry name" value="versican core protein isoform X2"/>
    <property type="match status" value="1"/>
</dbReference>
<dbReference type="FunFam" id="2.10.25.10:FF:000006">
    <property type="entry name" value="Versican core protein-like isoform 1"/>
    <property type="match status" value="1"/>
</dbReference>
<dbReference type="Gene3D" id="2.10.25.10">
    <property type="entry name" value="Laminin"/>
    <property type="match status" value="2"/>
</dbReference>
<dbReference type="Gene3D" id="3.10.100.10">
    <property type="entry name" value="Mannose-Binding Protein A, subunit A"/>
    <property type="match status" value="2"/>
</dbReference>
<dbReference type="InterPro" id="IPR001304">
    <property type="entry name" value="C-type_lectin-like"/>
</dbReference>
<dbReference type="InterPro" id="IPR016186">
    <property type="entry name" value="C-type_lectin-like/link_sf"/>
</dbReference>
<dbReference type="InterPro" id="IPR016187">
    <property type="entry name" value="CTDL_fold"/>
</dbReference>
<dbReference type="InterPro" id="IPR001881">
    <property type="entry name" value="EGF-like_Ca-bd_dom"/>
</dbReference>
<dbReference type="InterPro" id="IPR000742">
    <property type="entry name" value="EGF-like_dom"/>
</dbReference>
<dbReference type="InterPro" id="IPR000152">
    <property type="entry name" value="EGF-type_Asp/Asn_hydroxyl_site"/>
</dbReference>
<dbReference type="InterPro" id="IPR018097">
    <property type="entry name" value="EGF_Ca-bd_CS"/>
</dbReference>
<dbReference type="InterPro" id="IPR050691">
    <property type="entry name" value="Hyaluronan_bind_Proteoglycan"/>
</dbReference>
<dbReference type="InterPro" id="IPR000538">
    <property type="entry name" value="Link_dom"/>
</dbReference>
<dbReference type="PANTHER" id="PTHR22804">
    <property type="entry name" value="AGGRECAN/VERSICAN PROTEOGLYCAN"/>
    <property type="match status" value="1"/>
</dbReference>
<dbReference type="PANTHER" id="PTHR22804:SF6">
    <property type="entry name" value="VERSICAN CORE PROTEIN"/>
    <property type="match status" value="1"/>
</dbReference>
<dbReference type="Pfam" id="PF00008">
    <property type="entry name" value="EGF"/>
    <property type="match status" value="2"/>
</dbReference>
<dbReference type="Pfam" id="PF00059">
    <property type="entry name" value="Lectin_C"/>
    <property type="match status" value="1"/>
</dbReference>
<dbReference type="Pfam" id="PF00193">
    <property type="entry name" value="Xlink"/>
    <property type="match status" value="1"/>
</dbReference>
<dbReference type="PRINTS" id="PR00010">
    <property type="entry name" value="EGFBLOOD"/>
</dbReference>
<dbReference type="SMART" id="SM00181">
    <property type="entry name" value="EGF"/>
    <property type="match status" value="2"/>
</dbReference>
<dbReference type="SMART" id="SM00179">
    <property type="entry name" value="EGF_CA"/>
    <property type="match status" value="2"/>
</dbReference>
<dbReference type="SMART" id="SM00445">
    <property type="entry name" value="LINK"/>
    <property type="match status" value="1"/>
</dbReference>
<dbReference type="SUPFAM" id="SSF56436">
    <property type="entry name" value="C-type lectin-like"/>
    <property type="match status" value="3"/>
</dbReference>
<dbReference type="SUPFAM" id="SSF57196">
    <property type="entry name" value="EGF/Laminin"/>
    <property type="match status" value="1"/>
</dbReference>
<dbReference type="PROSITE" id="PS00010">
    <property type="entry name" value="ASX_HYDROXYL"/>
    <property type="match status" value="1"/>
</dbReference>
<dbReference type="PROSITE" id="PS50041">
    <property type="entry name" value="C_TYPE_LECTIN_2"/>
    <property type="match status" value="1"/>
</dbReference>
<dbReference type="PROSITE" id="PS00022">
    <property type="entry name" value="EGF_1"/>
    <property type="match status" value="2"/>
</dbReference>
<dbReference type="PROSITE" id="PS01186">
    <property type="entry name" value="EGF_2"/>
    <property type="match status" value="1"/>
</dbReference>
<dbReference type="PROSITE" id="PS50026">
    <property type="entry name" value="EGF_3"/>
    <property type="match status" value="2"/>
</dbReference>
<dbReference type="PROSITE" id="PS01187">
    <property type="entry name" value="EGF_CA"/>
    <property type="match status" value="1"/>
</dbReference>
<dbReference type="PROSITE" id="PS01241">
    <property type="entry name" value="LINK_1"/>
    <property type="match status" value="1"/>
</dbReference>
<dbReference type="PROSITE" id="PS50963">
    <property type="entry name" value="LINK_2"/>
    <property type="match status" value="2"/>
</dbReference>
<protein>
    <recommendedName>
        <fullName>Versican core protein</fullName>
    </recommendedName>
    <alternativeName>
        <fullName>Chondroitin sulfate proteoglycan core protein 2</fullName>
        <shortName>Chondroitin sulfate proteoglycan 2</shortName>
    </alternativeName>
    <alternativeName>
        <fullName>Large fibroblast proteoglycan</fullName>
    </alternativeName>
</protein>
<evidence type="ECO:0000250" key="1"/>
<evidence type="ECO:0000250" key="2">
    <source>
        <dbReference type="UniProtKB" id="P13611"/>
    </source>
</evidence>
<evidence type="ECO:0000255" key="3"/>
<evidence type="ECO:0000255" key="4">
    <source>
        <dbReference type="PROSITE-ProRule" id="PRU00040"/>
    </source>
</evidence>
<evidence type="ECO:0000255" key="5">
    <source>
        <dbReference type="PROSITE-ProRule" id="PRU00076"/>
    </source>
</evidence>
<evidence type="ECO:0000255" key="6">
    <source>
        <dbReference type="PROSITE-ProRule" id="PRU00323"/>
    </source>
</evidence>
<evidence type="ECO:0000256" key="7">
    <source>
        <dbReference type="SAM" id="MobiDB-lite"/>
    </source>
</evidence>
<evidence type="ECO:0000305" key="8"/>
<sequence length="862" mass="95583">YPIRAPRVGCYGDMMGKAGVRTYGFRSPQETYDVYCYVDHLDGDVFHLTAPSKFTFEEAAKECENQDARLATVGELQAAWRNGFDQCDYGWLSDASVRHPVTVARAQCGGGLLGVRTLYRFENQTGFPPPDSRFDAYCFKRRMSDLSVIGHPIDSESKEDEPCSEETDPVHDLMAEILPEFPDIIEIDLYHSEENEEEEEECANATDVTTTPSVQYINGKHLVTTVPKDPEAASGTISTNFPQTMEPAKLWSRQEVNPERQEIESETTSEEQIQEEKSFESPQNSPATEQTIFDSQTFTETELKTTGYSVLTTKKTYSDDKEMEEEGTSLANMSTPVPDANGVESFTTLPEATEKSHFFLATALVTESIPAEHVVTDSPIKEEESTKHFPKGMRPTIQELDTELLFSGLGSGEEVLPTLPTKSVNFTEVEQIRNTFYPHTSQVESTSSDKLEDFNRMENVAKEVGPLGSQTDIFEGNESVTSTTLIEILSDPGAEGPTVAPLPFFANIGHPQNQTLRWAEEIQTSKLEPSEEDGKPELLEETEASPTEFIAVEGTEILQDFQNKTDGQVSGEAIKMFPTIKTPEAGTVITTANEIKLEGATQWPHSTSASATYGIEAGVMPWLSPQTSERPTLSSSPEINPETQAALIRGQDSTVAASEQQVTARILDTNDQATVSPVEFNTEVATPPFSLLETSNETDFLIGINEESVEGTAIYLPGPDRCKMNPCLNGGTCYPTETSYVCTCVPGYSGDQCELDFDECHSNPCRNGATCADGFNTFRCLCLPSYVGALCEQDIETCDYGWHKFQGQCYKYFAHRRTWDAAERECRLQGAHLTSILSHEEQMFVNRVGHDYQWIGLNDKMF</sequence>
<organism>
    <name type="scientific">Macaca nemestrina</name>
    <name type="common">Pig-tailed macaque</name>
    <dbReference type="NCBI Taxonomy" id="9545"/>
    <lineage>
        <taxon>Eukaryota</taxon>
        <taxon>Metazoa</taxon>
        <taxon>Chordata</taxon>
        <taxon>Craniata</taxon>
        <taxon>Vertebrata</taxon>
        <taxon>Euteleostomi</taxon>
        <taxon>Mammalia</taxon>
        <taxon>Eutheria</taxon>
        <taxon>Euarchontoglires</taxon>
        <taxon>Primates</taxon>
        <taxon>Haplorrhini</taxon>
        <taxon>Catarrhini</taxon>
        <taxon>Cercopithecidae</taxon>
        <taxon>Cercopithecinae</taxon>
        <taxon>Macaca</taxon>
    </lineage>
</organism>
<proteinExistence type="evidence at transcript level"/>
<gene>
    <name type="primary">VCAN</name>
    <name type="synonym">CSPG2</name>
</gene>
<reference key="1">
    <citation type="journal article" date="1994" name="Matrix Biol.">
        <title>Identification of the proteoglycan versican in aorta and smooth muscle cells by DNA sequence analysis, in situ hybridization and immunohistochemistry.</title>
        <authorList>
            <person name="Yao L.Y."/>
            <person name="Moody C."/>
            <person name="Schoenherr E."/>
            <person name="Wight T.N."/>
            <person name="Sandell L.J."/>
        </authorList>
    </citation>
    <scope>NUCLEOTIDE SEQUENCE [MRNA]</scope>
    <source>
        <tissue>Aortic smooth muscle</tissue>
    </source>
</reference>